<dbReference type="EMBL" id="CP001252">
    <property type="protein sequence ID" value="ACK44937.1"/>
    <property type="molecule type" value="Genomic_DNA"/>
</dbReference>
<dbReference type="RefSeq" id="WP_006079870.1">
    <property type="nucleotide sequence ID" value="NC_011663.1"/>
</dbReference>
<dbReference type="SMR" id="B8E4J6"/>
<dbReference type="GeneID" id="94729700"/>
<dbReference type="KEGG" id="sbp:Sbal223_0403"/>
<dbReference type="HOGENOM" id="CLU_064548_3_1_6"/>
<dbReference type="Proteomes" id="UP000002507">
    <property type="component" value="Chromosome"/>
</dbReference>
<dbReference type="GO" id="GO:0022625">
    <property type="term" value="C:cytosolic large ribosomal subunit"/>
    <property type="evidence" value="ECO:0007669"/>
    <property type="project" value="TreeGrafter"/>
</dbReference>
<dbReference type="GO" id="GO:0003735">
    <property type="term" value="F:structural constituent of ribosome"/>
    <property type="evidence" value="ECO:0007669"/>
    <property type="project" value="InterPro"/>
</dbReference>
<dbReference type="GO" id="GO:0006412">
    <property type="term" value="P:translation"/>
    <property type="evidence" value="ECO:0007669"/>
    <property type="project" value="UniProtKB-UniRule"/>
</dbReference>
<dbReference type="FunFam" id="2.30.170.40:FF:000001">
    <property type="entry name" value="50S ribosomal protein L28"/>
    <property type="match status" value="1"/>
</dbReference>
<dbReference type="Gene3D" id="2.30.170.40">
    <property type="entry name" value="Ribosomal protein L28/L24"/>
    <property type="match status" value="1"/>
</dbReference>
<dbReference type="HAMAP" id="MF_00373">
    <property type="entry name" value="Ribosomal_bL28"/>
    <property type="match status" value="1"/>
</dbReference>
<dbReference type="InterPro" id="IPR026569">
    <property type="entry name" value="Ribosomal_bL28"/>
</dbReference>
<dbReference type="InterPro" id="IPR034704">
    <property type="entry name" value="Ribosomal_bL28/bL31-like_sf"/>
</dbReference>
<dbReference type="InterPro" id="IPR001383">
    <property type="entry name" value="Ribosomal_bL28_bact-type"/>
</dbReference>
<dbReference type="InterPro" id="IPR037147">
    <property type="entry name" value="Ribosomal_bL28_sf"/>
</dbReference>
<dbReference type="NCBIfam" id="TIGR00009">
    <property type="entry name" value="L28"/>
    <property type="match status" value="1"/>
</dbReference>
<dbReference type="PANTHER" id="PTHR13528">
    <property type="entry name" value="39S RIBOSOMAL PROTEIN L28, MITOCHONDRIAL"/>
    <property type="match status" value="1"/>
</dbReference>
<dbReference type="PANTHER" id="PTHR13528:SF2">
    <property type="entry name" value="LARGE RIBOSOMAL SUBUNIT PROTEIN BL28M"/>
    <property type="match status" value="1"/>
</dbReference>
<dbReference type="Pfam" id="PF00830">
    <property type="entry name" value="Ribosomal_L28"/>
    <property type="match status" value="1"/>
</dbReference>
<dbReference type="SUPFAM" id="SSF143800">
    <property type="entry name" value="L28p-like"/>
    <property type="match status" value="1"/>
</dbReference>
<organism>
    <name type="scientific">Shewanella baltica (strain OS223)</name>
    <dbReference type="NCBI Taxonomy" id="407976"/>
    <lineage>
        <taxon>Bacteria</taxon>
        <taxon>Pseudomonadati</taxon>
        <taxon>Pseudomonadota</taxon>
        <taxon>Gammaproteobacteria</taxon>
        <taxon>Alteromonadales</taxon>
        <taxon>Shewanellaceae</taxon>
        <taxon>Shewanella</taxon>
    </lineage>
</organism>
<evidence type="ECO:0000255" key="1">
    <source>
        <dbReference type="HAMAP-Rule" id="MF_00373"/>
    </source>
</evidence>
<evidence type="ECO:0000256" key="2">
    <source>
        <dbReference type="SAM" id="MobiDB-lite"/>
    </source>
</evidence>
<evidence type="ECO:0000305" key="3"/>
<sequence>MSRVCQVTGKKPMVGNNRSHAKNATRRRFLPNLQNHRFWLEEEKRFVQLRVSTKGIRLIDKKGIEVVVAELRARGEKV</sequence>
<feature type="chain" id="PRO_1000195938" description="Large ribosomal subunit protein bL28">
    <location>
        <begin position="1"/>
        <end position="78"/>
    </location>
</feature>
<feature type="region of interest" description="Disordered" evidence="2">
    <location>
        <begin position="1"/>
        <end position="21"/>
    </location>
</feature>
<gene>
    <name evidence="1" type="primary">rpmB</name>
    <name type="ordered locus">Sbal223_0403</name>
</gene>
<keyword id="KW-0687">Ribonucleoprotein</keyword>
<keyword id="KW-0689">Ribosomal protein</keyword>
<name>RL28_SHEB2</name>
<comment type="similarity">
    <text evidence="1">Belongs to the bacterial ribosomal protein bL28 family.</text>
</comment>
<protein>
    <recommendedName>
        <fullName evidence="1">Large ribosomal subunit protein bL28</fullName>
    </recommendedName>
    <alternativeName>
        <fullName evidence="3">50S ribosomal protein L28</fullName>
    </alternativeName>
</protein>
<proteinExistence type="inferred from homology"/>
<accession>B8E4J6</accession>
<reference key="1">
    <citation type="submission" date="2008-12" db="EMBL/GenBank/DDBJ databases">
        <title>Complete sequence of chromosome of Shewanella baltica OS223.</title>
        <authorList>
            <consortium name="US DOE Joint Genome Institute"/>
            <person name="Lucas S."/>
            <person name="Copeland A."/>
            <person name="Lapidus A."/>
            <person name="Glavina del Rio T."/>
            <person name="Dalin E."/>
            <person name="Tice H."/>
            <person name="Bruce D."/>
            <person name="Goodwin L."/>
            <person name="Pitluck S."/>
            <person name="Chertkov O."/>
            <person name="Meincke L."/>
            <person name="Brettin T."/>
            <person name="Detter J.C."/>
            <person name="Han C."/>
            <person name="Kuske C.R."/>
            <person name="Larimer F."/>
            <person name="Land M."/>
            <person name="Hauser L."/>
            <person name="Kyrpides N."/>
            <person name="Ovchinnikova G."/>
            <person name="Brettar I."/>
            <person name="Rodrigues J."/>
            <person name="Konstantinidis K."/>
            <person name="Tiedje J."/>
        </authorList>
    </citation>
    <scope>NUCLEOTIDE SEQUENCE [LARGE SCALE GENOMIC DNA]</scope>
    <source>
        <strain>OS223</strain>
    </source>
</reference>